<protein>
    <recommendedName>
        <fullName evidence="5">Cysteine protease ATG4C</fullName>
        <ecNumber evidence="2">3.4.22.-</ecNumber>
    </recommendedName>
    <alternativeName>
        <fullName evidence="2">Autophagy-related protein 4 homolog C</fullName>
    </alternativeName>
</protein>
<organism>
    <name type="scientific">Xenopus tropicalis</name>
    <name type="common">Western clawed frog</name>
    <name type="synonym">Silurana tropicalis</name>
    <dbReference type="NCBI Taxonomy" id="8364"/>
    <lineage>
        <taxon>Eukaryota</taxon>
        <taxon>Metazoa</taxon>
        <taxon>Chordata</taxon>
        <taxon>Craniata</taxon>
        <taxon>Vertebrata</taxon>
        <taxon>Euteleostomi</taxon>
        <taxon>Amphibia</taxon>
        <taxon>Batrachia</taxon>
        <taxon>Anura</taxon>
        <taxon>Pipoidea</taxon>
        <taxon>Pipidae</taxon>
        <taxon>Xenopodinae</taxon>
        <taxon>Xenopus</taxon>
        <taxon>Silurana</taxon>
    </lineage>
</organism>
<dbReference type="EC" id="3.4.22.-" evidence="2"/>
<dbReference type="EMBL" id="CR762081">
    <property type="protein sequence ID" value="CAJ81923.1"/>
    <property type="molecule type" value="mRNA"/>
</dbReference>
<dbReference type="EMBL" id="BC080152">
    <property type="protein sequence ID" value="AAH80152.1"/>
    <property type="molecule type" value="mRNA"/>
</dbReference>
<dbReference type="RefSeq" id="NP_001007883.1">
    <property type="nucleotide sequence ID" value="NM_001007882.2"/>
</dbReference>
<dbReference type="SMR" id="Q68EP9"/>
<dbReference type="FunCoup" id="Q68EP9">
    <property type="interactions" value="160"/>
</dbReference>
<dbReference type="STRING" id="8364.ENSXETP00000041597"/>
<dbReference type="MEROPS" id="C54.004"/>
<dbReference type="PaxDb" id="8364-ENSXETP00000023701"/>
<dbReference type="GeneID" id="493268"/>
<dbReference type="KEGG" id="xtr:493268"/>
<dbReference type="AGR" id="Xenbase:XB-GENE-941086"/>
<dbReference type="CTD" id="84938"/>
<dbReference type="Xenbase" id="XB-GENE-941086">
    <property type="gene designation" value="atg4c"/>
</dbReference>
<dbReference type="eggNOG" id="KOG2674">
    <property type="taxonomic scope" value="Eukaryota"/>
</dbReference>
<dbReference type="HOGENOM" id="CLU_021259_3_2_1"/>
<dbReference type="InParanoid" id="Q68EP9"/>
<dbReference type="OMA" id="KMAGDWY"/>
<dbReference type="OrthoDB" id="2960936at2759"/>
<dbReference type="TreeFam" id="TF314847"/>
<dbReference type="Proteomes" id="UP000008143">
    <property type="component" value="Chromosome 4"/>
</dbReference>
<dbReference type="GO" id="GO:0005737">
    <property type="term" value="C:cytoplasm"/>
    <property type="evidence" value="ECO:0007669"/>
    <property type="project" value="UniProtKB-SubCell"/>
</dbReference>
<dbReference type="GO" id="GO:0008234">
    <property type="term" value="F:cysteine-type peptidase activity"/>
    <property type="evidence" value="ECO:0000250"/>
    <property type="project" value="UniProtKB"/>
</dbReference>
<dbReference type="GO" id="GO:0019786">
    <property type="term" value="F:protein-phosphatidylethanolamide deconjugating activity"/>
    <property type="evidence" value="ECO:0007669"/>
    <property type="project" value="InterPro"/>
</dbReference>
<dbReference type="GO" id="GO:0006914">
    <property type="term" value="P:autophagy"/>
    <property type="evidence" value="ECO:0000250"/>
    <property type="project" value="UniProtKB"/>
</dbReference>
<dbReference type="GO" id="GO:0051697">
    <property type="term" value="P:protein delipidation"/>
    <property type="evidence" value="ECO:0000250"/>
    <property type="project" value="UniProtKB"/>
</dbReference>
<dbReference type="GO" id="GO:0015031">
    <property type="term" value="P:protein transport"/>
    <property type="evidence" value="ECO:0007669"/>
    <property type="project" value="UniProtKB-KW"/>
</dbReference>
<dbReference type="GO" id="GO:0006508">
    <property type="term" value="P:proteolysis"/>
    <property type="evidence" value="ECO:0007669"/>
    <property type="project" value="UniProtKB-KW"/>
</dbReference>
<dbReference type="InterPro" id="IPR038765">
    <property type="entry name" value="Papain-like_cys_pep_sf"/>
</dbReference>
<dbReference type="InterPro" id="IPR005078">
    <property type="entry name" value="Peptidase_C54"/>
</dbReference>
<dbReference type="InterPro" id="IPR046792">
    <property type="entry name" value="Peptidase_C54_cat"/>
</dbReference>
<dbReference type="PANTHER" id="PTHR22624">
    <property type="entry name" value="CYSTEINE PROTEASE ATG4"/>
    <property type="match status" value="1"/>
</dbReference>
<dbReference type="PANTHER" id="PTHR22624:SF38">
    <property type="entry name" value="CYSTEINE PROTEASE ATG4C"/>
    <property type="match status" value="1"/>
</dbReference>
<dbReference type="Pfam" id="PF03416">
    <property type="entry name" value="Peptidase_C54"/>
    <property type="match status" value="1"/>
</dbReference>
<dbReference type="SUPFAM" id="SSF54001">
    <property type="entry name" value="Cysteine proteinases"/>
    <property type="match status" value="1"/>
</dbReference>
<keyword id="KW-0072">Autophagy</keyword>
<keyword id="KW-0963">Cytoplasm</keyword>
<keyword id="KW-0378">Hydrolase</keyword>
<keyword id="KW-0645">Protease</keyword>
<keyword id="KW-0653">Protein transport</keyword>
<keyword id="KW-1185">Reference proteome</keyword>
<keyword id="KW-0788">Thiol protease</keyword>
<keyword id="KW-0813">Transport</keyword>
<keyword id="KW-0833">Ubl conjugation pathway</keyword>
<gene>
    <name evidence="2" type="primary">atg4c</name>
    <name evidence="2" type="synonym">apg4c</name>
    <name evidence="4" type="ORF">TEgg022b13.1</name>
</gene>
<reference key="1">
    <citation type="submission" date="2006-03" db="EMBL/GenBank/DDBJ databases">
        <authorList>
            <consortium name="Sanger Xenopus tropicalis EST/cDNA project"/>
        </authorList>
    </citation>
    <scope>NUCLEOTIDE SEQUENCE [LARGE SCALE MRNA]</scope>
    <source>
        <tissue>Egg</tissue>
    </source>
</reference>
<reference key="2">
    <citation type="submission" date="2004-08" db="EMBL/GenBank/DDBJ databases">
        <authorList>
            <consortium name="NIH - Xenopus Gene Collection (XGC) project"/>
        </authorList>
    </citation>
    <scope>NUCLEOTIDE SEQUENCE [LARGE SCALE MRNA]</scope>
    <source>
        <tissue>Ovary</tissue>
    </source>
</reference>
<evidence type="ECO:0000250" key="1">
    <source>
        <dbReference type="UniProtKB" id="Q8BGE6"/>
    </source>
</evidence>
<evidence type="ECO:0000250" key="2">
    <source>
        <dbReference type="UniProtKB" id="Q96DT6"/>
    </source>
</evidence>
<evidence type="ECO:0000250" key="3">
    <source>
        <dbReference type="UniProtKB" id="Q9Y4P1"/>
    </source>
</evidence>
<evidence type="ECO:0000303" key="4">
    <source ref="1"/>
</evidence>
<evidence type="ECO:0000305" key="5"/>
<sequence>MEASGTDDVEKLKSKFLSAWHNMKYSWVLKTKTYFKRNSPVFLLGKCYHFKYEDSSVTSDGGSNSGSESKEDLSGNVDEFRKDFISRIWLTYREEFPQIETSSWTTDCGWGCTLRTGQMLLAQGLIVHFLGRDWTWTEALDIFSSESEFWTANTARKLTPSLETSFSENNECVSSNKQPLHNCDKKSNSEDFHQKIISWFADYPLAYFGLHQLVKLGKNSGKVAGDWYGPAVVSHLLRKAIEESSDPELQGITIYVAQDCTIYSADVYDLQCNKGTEKAVVILVPVRLGGERTNMEYFEFVKGILSLEFCIGIIGGKPKQSYYFVGFQDDSLIYMDPHYCQSFVDVSVKNFPLESFHCPSPKKMSFKKMDPSCTIGFYCRNAREFEKAAEELTKVLKSSTKQNYPLFTFVNGHAQDFDFVCTPVYDQNDLFTEDEKKRLKRFSTEEFVLL</sequence>
<name>ATG4C_XENTR</name>
<comment type="function">
    <text evidence="2 3">Cysteine protease that plays a key role in autophagy by mediating both proteolytic activation and delipidation of ATG8 family proteins. The protease activity is required for proteolytic activation of ATG8 family proteins: cleaves the C-terminal amino acid of ATG8 proteins to reveal a C-terminal glycine (By similarity). Exposure of the glycine at the C-terminus is essential for ATG8 proteins conjugation to phosphatidylethanolamine (PE) and insertion to membranes, which is necessary for autophagy (By similarity). In addition to the protease activity, also mediates delipidation of ATG8 family proteins. Catalyzes delipidation of PE-conjugated forms of ATG8 proteins during macroautophagy (By similarity).</text>
</comment>
<comment type="catalytic activity">
    <reaction evidence="2">
        <text>[protein]-C-terminal L-amino acid-glycyl-phosphatidylethanolamide + H2O = [protein]-C-terminal L-amino acid-glycine + a 1,2-diacyl-sn-glycero-3-phosphoethanolamine</text>
        <dbReference type="Rhea" id="RHEA:67548"/>
        <dbReference type="Rhea" id="RHEA-COMP:17323"/>
        <dbReference type="Rhea" id="RHEA-COMP:17324"/>
        <dbReference type="ChEBI" id="CHEBI:15377"/>
        <dbReference type="ChEBI" id="CHEBI:64612"/>
        <dbReference type="ChEBI" id="CHEBI:172940"/>
        <dbReference type="ChEBI" id="CHEBI:172941"/>
    </reaction>
    <physiologicalReaction direction="left-to-right" evidence="2">
        <dbReference type="Rhea" id="RHEA:67549"/>
    </physiologicalReaction>
</comment>
<comment type="subcellular location">
    <subcellularLocation>
        <location evidence="1">Cytoplasm</location>
    </subcellularLocation>
</comment>
<comment type="similarity">
    <text evidence="5">Belongs to the peptidase C54 family.</text>
</comment>
<feature type="chain" id="PRO_0000215852" description="Cysteine protease ATG4C">
    <location>
        <begin position="1"/>
        <end position="450"/>
    </location>
</feature>
<feature type="active site" description="Nucleophile" evidence="3">
    <location>
        <position position="112"/>
    </location>
</feature>
<feature type="active site" evidence="3">
    <location>
        <position position="336"/>
    </location>
</feature>
<feature type="active site" evidence="3">
    <location>
        <position position="338"/>
    </location>
</feature>
<proteinExistence type="evidence at transcript level"/>
<accession>Q68EP9</accession>
<accession>Q28FA3</accession>